<protein>
    <recommendedName>
        <fullName evidence="1">Phosphoribosyl-AMP cyclohydrolase</fullName>
        <shortName evidence="1">PRA-CH</shortName>
        <ecNumber evidence="1">3.5.4.19</ecNumber>
    </recommendedName>
</protein>
<comment type="function">
    <text evidence="1">Catalyzes the hydrolysis of the adenine ring of phosphoribosyl-AMP.</text>
</comment>
<comment type="catalytic activity">
    <reaction evidence="1">
        <text>1-(5-phospho-beta-D-ribosyl)-5'-AMP + H2O = 1-(5-phospho-beta-D-ribosyl)-5-[(5-phospho-beta-D-ribosylamino)methylideneamino]imidazole-4-carboxamide</text>
        <dbReference type="Rhea" id="RHEA:20049"/>
        <dbReference type="ChEBI" id="CHEBI:15377"/>
        <dbReference type="ChEBI" id="CHEBI:58435"/>
        <dbReference type="ChEBI" id="CHEBI:59457"/>
        <dbReference type="EC" id="3.5.4.19"/>
    </reaction>
</comment>
<comment type="cofactor">
    <cofactor evidence="1">
        <name>Mg(2+)</name>
        <dbReference type="ChEBI" id="CHEBI:18420"/>
    </cofactor>
    <text evidence="1">Binds 1 Mg(2+) ion per subunit.</text>
</comment>
<comment type="cofactor">
    <cofactor evidence="1">
        <name>Zn(2+)</name>
        <dbReference type="ChEBI" id="CHEBI:29105"/>
    </cofactor>
    <text evidence="1">Binds 1 zinc ion per subunit.</text>
</comment>
<comment type="pathway">
    <text evidence="1">Amino-acid biosynthesis; L-histidine biosynthesis; L-histidine from 5-phospho-alpha-D-ribose 1-diphosphate: step 3/9.</text>
</comment>
<comment type="subunit">
    <text evidence="1">Homodimer.</text>
</comment>
<comment type="subcellular location">
    <subcellularLocation>
        <location evidence="1">Cytoplasm</location>
    </subcellularLocation>
</comment>
<comment type="similarity">
    <text evidence="1">Belongs to the PRA-CH family.</text>
</comment>
<keyword id="KW-0028">Amino-acid biosynthesis</keyword>
<keyword id="KW-0963">Cytoplasm</keyword>
<keyword id="KW-0368">Histidine biosynthesis</keyword>
<keyword id="KW-0378">Hydrolase</keyword>
<keyword id="KW-0460">Magnesium</keyword>
<keyword id="KW-0479">Metal-binding</keyword>
<keyword id="KW-1185">Reference proteome</keyword>
<keyword id="KW-0862">Zinc</keyword>
<gene>
    <name evidence="1" type="primary">hisI</name>
    <name type="ordered locus">SAV_6170</name>
</gene>
<accession>Q82A89</accession>
<name>HIS3_STRAW</name>
<feature type="chain" id="PRO_0000136500" description="Phosphoribosyl-AMP cyclohydrolase">
    <location>
        <begin position="1"/>
        <end position="133"/>
    </location>
</feature>
<feature type="binding site" evidence="1">
    <location>
        <position position="90"/>
    </location>
    <ligand>
        <name>Mg(2+)</name>
        <dbReference type="ChEBI" id="CHEBI:18420"/>
    </ligand>
</feature>
<feature type="binding site" evidence="1">
    <location>
        <position position="91"/>
    </location>
    <ligand>
        <name>Zn(2+)</name>
        <dbReference type="ChEBI" id="CHEBI:29105"/>
        <note>ligand shared between dimeric partners</note>
    </ligand>
</feature>
<feature type="binding site" evidence="1">
    <location>
        <position position="92"/>
    </location>
    <ligand>
        <name>Mg(2+)</name>
        <dbReference type="ChEBI" id="CHEBI:18420"/>
    </ligand>
</feature>
<feature type="binding site" evidence="1">
    <location>
        <position position="94"/>
    </location>
    <ligand>
        <name>Mg(2+)</name>
        <dbReference type="ChEBI" id="CHEBI:18420"/>
    </ligand>
</feature>
<feature type="binding site" evidence="1">
    <location>
        <position position="107"/>
    </location>
    <ligand>
        <name>Zn(2+)</name>
        <dbReference type="ChEBI" id="CHEBI:29105"/>
        <note>ligand shared between dimeric partners</note>
    </ligand>
</feature>
<feature type="binding site" evidence="1">
    <location>
        <position position="114"/>
    </location>
    <ligand>
        <name>Zn(2+)</name>
        <dbReference type="ChEBI" id="CHEBI:29105"/>
        <note>ligand shared between dimeric partners</note>
    </ligand>
</feature>
<proteinExistence type="inferred from homology"/>
<reference key="1">
    <citation type="journal article" date="2001" name="Proc. Natl. Acad. Sci. U.S.A.">
        <title>Genome sequence of an industrial microorganism Streptomyces avermitilis: deducing the ability of producing secondary metabolites.</title>
        <authorList>
            <person name="Omura S."/>
            <person name="Ikeda H."/>
            <person name="Ishikawa J."/>
            <person name="Hanamoto A."/>
            <person name="Takahashi C."/>
            <person name="Shinose M."/>
            <person name="Takahashi Y."/>
            <person name="Horikawa H."/>
            <person name="Nakazawa H."/>
            <person name="Osonoe T."/>
            <person name="Kikuchi H."/>
            <person name="Shiba T."/>
            <person name="Sakaki Y."/>
            <person name="Hattori M."/>
        </authorList>
    </citation>
    <scope>NUCLEOTIDE SEQUENCE [LARGE SCALE GENOMIC DNA]</scope>
    <source>
        <strain>ATCC 31267 / DSM 46492 / JCM 5070 / NBRC 14893 / NCIMB 12804 / NRRL 8165 / MA-4680</strain>
    </source>
</reference>
<reference key="2">
    <citation type="journal article" date="2003" name="Nat. Biotechnol.">
        <title>Complete genome sequence and comparative analysis of the industrial microorganism Streptomyces avermitilis.</title>
        <authorList>
            <person name="Ikeda H."/>
            <person name="Ishikawa J."/>
            <person name="Hanamoto A."/>
            <person name="Shinose M."/>
            <person name="Kikuchi H."/>
            <person name="Shiba T."/>
            <person name="Sakaki Y."/>
            <person name="Hattori M."/>
            <person name="Omura S."/>
        </authorList>
    </citation>
    <scope>NUCLEOTIDE SEQUENCE [LARGE SCALE GENOMIC DNA]</scope>
    <source>
        <strain>ATCC 31267 / DSM 46492 / JCM 5070 / NBRC 14893 / NCIMB 12804 / NRRL 8165 / MA-4680</strain>
    </source>
</reference>
<organism>
    <name type="scientific">Streptomyces avermitilis (strain ATCC 31267 / DSM 46492 / JCM 5070 / NBRC 14893 / NCIMB 12804 / NRRL 8165 / MA-4680)</name>
    <dbReference type="NCBI Taxonomy" id="227882"/>
    <lineage>
        <taxon>Bacteria</taxon>
        <taxon>Bacillati</taxon>
        <taxon>Actinomycetota</taxon>
        <taxon>Actinomycetes</taxon>
        <taxon>Kitasatosporales</taxon>
        <taxon>Streptomycetaceae</taxon>
        <taxon>Streptomyces</taxon>
    </lineage>
</organism>
<dbReference type="EC" id="3.5.4.19" evidence="1"/>
<dbReference type="EMBL" id="BA000030">
    <property type="protein sequence ID" value="BAC73881.1"/>
    <property type="molecule type" value="Genomic_DNA"/>
</dbReference>
<dbReference type="RefSeq" id="WP_010987571.1">
    <property type="nucleotide sequence ID" value="NZ_JZJK01000089.1"/>
</dbReference>
<dbReference type="SMR" id="Q82A89"/>
<dbReference type="GeneID" id="41543246"/>
<dbReference type="KEGG" id="sma:SAVERM_6170"/>
<dbReference type="eggNOG" id="COG0139">
    <property type="taxonomic scope" value="Bacteria"/>
</dbReference>
<dbReference type="HOGENOM" id="CLU_048577_5_2_11"/>
<dbReference type="OrthoDB" id="9795769at2"/>
<dbReference type="UniPathway" id="UPA00031">
    <property type="reaction ID" value="UER00008"/>
</dbReference>
<dbReference type="Proteomes" id="UP000000428">
    <property type="component" value="Chromosome"/>
</dbReference>
<dbReference type="GO" id="GO:0005737">
    <property type="term" value="C:cytoplasm"/>
    <property type="evidence" value="ECO:0007669"/>
    <property type="project" value="UniProtKB-SubCell"/>
</dbReference>
<dbReference type="GO" id="GO:0000287">
    <property type="term" value="F:magnesium ion binding"/>
    <property type="evidence" value="ECO:0007669"/>
    <property type="project" value="UniProtKB-UniRule"/>
</dbReference>
<dbReference type="GO" id="GO:0004635">
    <property type="term" value="F:phosphoribosyl-AMP cyclohydrolase activity"/>
    <property type="evidence" value="ECO:0007669"/>
    <property type="project" value="UniProtKB-UniRule"/>
</dbReference>
<dbReference type="GO" id="GO:0008270">
    <property type="term" value="F:zinc ion binding"/>
    <property type="evidence" value="ECO:0007669"/>
    <property type="project" value="UniProtKB-UniRule"/>
</dbReference>
<dbReference type="GO" id="GO:0000105">
    <property type="term" value="P:L-histidine biosynthetic process"/>
    <property type="evidence" value="ECO:0007669"/>
    <property type="project" value="UniProtKB-UniRule"/>
</dbReference>
<dbReference type="FunFam" id="3.10.20.810:FF:000001">
    <property type="entry name" value="Histidine biosynthesis bifunctional protein HisIE"/>
    <property type="match status" value="1"/>
</dbReference>
<dbReference type="Gene3D" id="3.10.20.810">
    <property type="entry name" value="Phosphoribosyl-AMP cyclohydrolase"/>
    <property type="match status" value="1"/>
</dbReference>
<dbReference type="HAMAP" id="MF_01021">
    <property type="entry name" value="HisI"/>
    <property type="match status" value="1"/>
</dbReference>
<dbReference type="InterPro" id="IPR026660">
    <property type="entry name" value="PRA-CH"/>
</dbReference>
<dbReference type="InterPro" id="IPR002496">
    <property type="entry name" value="PRib_AMP_CycHydrolase_dom"/>
</dbReference>
<dbReference type="InterPro" id="IPR038019">
    <property type="entry name" value="PRib_AMP_CycHydrolase_sf"/>
</dbReference>
<dbReference type="NCBIfam" id="NF000768">
    <property type="entry name" value="PRK00051.1"/>
    <property type="match status" value="1"/>
</dbReference>
<dbReference type="PANTHER" id="PTHR42945">
    <property type="entry name" value="HISTIDINE BIOSYNTHESIS BIFUNCTIONAL PROTEIN"/>
    <property type="match status" value="1"/>
</dbReference>
<dbReference type="PANTHER" id="PTHR42945:SF11">
    <property type="entry name" value="PHOSPHORIBOSYL-AMP CYCLOHYDROLASE"/>
    <property type="match status" value="1"/>
</dbReference>
<dbReference type="Pfam" id="PF01502">
    <property type="entry name" value="PRA-CH"/>
    <property type="match status" value="1"/>
</dbReference>
<dbReference type="SUPFAM" id="SSF141734">
    <property type="entry name" value="HisI-like"/>
    <property type="match status" value="1"/>
</dbReference>
<sequence>MTSTPQPSRPSSLDAEIAARLKRSADGLVPAIAQQYDTGEVLMLGWMDDEALHRTLTTGRCTYWSRSRGEYWVKGDTSGHVQYVKSVALDCDADTVLVKVDQVGAACHTGAHTCFDADVLLKDGDSGVPAADQ</sequence>
<evidence type="ECO:0000255" key="1">
    <source>
        <dbReference type="HAMAP-Rule" id="MF_01021"/>
    </source>
</evidence>